<accession>Q81LS2</accession>
<accession>Q6HT77</accession>
<accession>Q6KMG7</accession>
<sequence>MSKIIGIDLGTTNSCVAVMEGGEPKVIPNPEGNRTTPSVVAFKNEERQVGEVAKRQAITNPNTIMSVKRHMGTDYKVEVEGKDYTPQEISAIILQNLKASAEAYLGETVTKAVITVPAYFNDAERQATKDAGRIAGLEVERIINEPTAAALAYGLEKQDEEQKILVYDLGGGTFDVSILELADGTFEVISTAGDNRLGGDDFDQVIIDHLVAEFKKENNIDLSQDKMALQRLKDAAEKAKKDLSGVTQTQISLPFISAGAAGPLHLELTLTRAKFEELSAGLVERTLEPTRRALKDAGFAPSELDKVILVGGSTRIPAVQEAIKRETGKEPYKGVNPDEVVALGAAVQGGVLTGDVEGVLLLDVTPLSLGIETMGGVFTKLIERNTTIPTSKSQVFSTAADNQPAVDIHVLQGERPMSADNKTLGRFQLTDLPPAPRGIPQIEVTFDIDANGIVNVRAKDLGTSKEQAITIQSSSGLSDEEVERMVQEAEANADADQKRKEEVELRNEADQLVFQTDKVVKDLEGKVDAAEVAKATEAKEALQAAIEKNELEEIRAKKDALQEIVQQLTVKLYEQAQAAAGQAEGAEGAQDAGAKKDNVVDAEFEEVKEDK</sequence>
<dbReference type="EMBL" id="AE016879">
    <property type="protein sequence ID" value="AAP28248.1"/>
    <property type="molecule type" value="Genomic_DNA"/>
</dbReference>
<dbReference type="EMBL" id="AE017334">
    <property type="protein sequence ID" value="AAT33660.1"/>
    <property type="molecule type" value="Genomic_DNA"/>
</dbReference>
<dbReference type="EMBL" id="AE017225">
    <property type="protein sequence ID" value="AAT56512.1"/>
    <property type="molecule type" value="Genomic_DNA"/>
</dbReference>
<dbReference type="RefSeq" id="NP_846762.1">
    <property type="nucleotide sequence ID" value="NC_003997.3"/>
</dbReference>
<dbReference type="RefSeq" id="WP_000034699.1">
    <property type="nucleotide sequence ID" value="NZ_WXXJ01000027.1"/>
</dbReference>
<dbReference type="RefSeq" id="YP_030461.1">
    <property type="nucleotide sequence ID" value="NC_005945.1"/>
</dbReference>
<dbReference type="SMR" id="Q81LS2"/>
<dbReference type="STRING" id="261594.GBAA_4539"/>
<dbReference type="DNASU" id="1088269"/>
<dbReference type="GeneID" id="45024191"/>
<dbReference type="KEGG" id="ban:BA_4539"/>
<dbReference type="KEGG" id="bar:GBAA_4539"/>
<dbReference type="KEGG" id="bat:BAS4213"/>
<dbReference type="PATRIC" id="fig|198094.11.peg.4507"/>
<dbReference type="eggNOG" id="COG0443">
    <property type="taxonomic scope" value="Bacteria"/>
</dbReference>
<dbReference type="HOGENOM" id="CLU_005965_2_4_9"/>
<dbReference type="OMA" id="MGTDWKI"/>
<dbReference type="OrthoDB" id="9766019at2"/>
<dbReference type="Proteomes" id="UP000000427">
    <property type="component" value="Chromosome"/>
</dbReference>
<dbReference type="Proteomes" id="UP000000594">
    <property type="component" value="Chromosome"/>
</dbReference>
<dbReference type="GO" id="GO:0005524">
    <property type="term" value="F:ATP binding"/>
    <property type="evidence" value="ECO:0007669"/>
    <property type="project" value="UniProtKB-UniRule"/>
</dbReference>
<dbReference type="GO" id="GO:0140662">
    <property type="term" value="F:ATP-dependent protein folding chaperone"/>
    <property type="evidence" value="ECO:0007669"/>
    <property type="project" value="InterPro"/>
</dbReference>
<dbReference type="GO" id="GO:0051082">
    <property type="term" value="F:unfolded protein binding"/>
    <property type="evidence" value="ECO:0007669"/>
    <property type="project" value="InterPro"/>
</dbReference>
<dbReference type="CDD" id="cd10234">
    <property type="entry name" value="ASKHA_NBD_HSP70_DnaK-like"/>
    <property type="match status" value="1"/>
</dbReference>
<dbReference type="FunFam" id="2.60.34.10:FF:000014">
    <property type="entry name" value="Chaperone protein DnaK HSP70"/>
    <property type="match status" value="1"/>
</dbReference>
<dbReference type="FunFam" id="1.20.1270.10:FF:000004">
    <property type="entry name" value="Molecular chaperone DnaK"/>
    <property type="match status" value="1"/>
</dbReference>
<dbReference type="FunFam" id="3.30.420.40:FF:000071">
    <property type="entry name" value="Molecular chaperone DnaK"/>
    <property type="match status" value="1"/>
</dbReference>
<dbReference type="FunFam" id="3.90.640.10:FF:000003">
    <property type="entry name" value="Molecular chaperone DnaK"/>
    <property type="match status" value="1"/>
</dbReference>
<dbReference type="Gene3D" id="1.20.1270.10">
    <property type="match status" value="1"/>
</dbReference>
<dbReference type="Gene3D" id="3.30.420.40">
    <property type="match status" value="2"/>
</dbReference>
<dbReference type="Gene3D" id="3.90.640.10">
    <property type="entry name" value="Actin, Chain A, domain 4"/>
    <property type="match status" value="1"/>
</dbReference>
<dbReference type="Gene3D" id="2.60.34.10">
    <property type="entry name" value="Substrate Binding Domain Of DNAk, Chain A, domain 1"/>
    <property type="match status" value="1"/>
</dbReference>
<dbReference type="HAMAP" id="MF_00332">
    <property type="entry name" value="DnaK"/>
    <property type="match status" value="1"/>
</dbReference>
<dbReference type="InterPro" id="IPR043129">
    <property type="entry name" value="ATPase_NBD"/>
</dbReference>
<dbReference type="InterPro" id="IPR012725">
    <property type="entry name" value="Chaperone_DnaK"/>
</dbReference>
<dbReference type="InterPro" id="IPR018181">
    <property type="entry name" value="Heat_shock_70_CS"/>
</dbReference>
<dbReference type="InterPro" id="IPR029048">
    <property type="entry name" value="HSP70_C_sf"/>
</dbReference>
<dbReference type="InterPro" id="IPR029047">
    <property type="entry name" value="HSP70_peptide-bd_sf"/>
</dbReference>
<dbReference type="InterPro" id="IPR013126">
    <property type="entry name" value="Hsp_70_fam"/>
</dbReference>
<dbReference type="NCBIfam" id="NF001413">
    <property type="entry name" value="PRK00290.1"/>
    <property type="match status" value="1"/>
</dbReference>
<dbReference type="NCBIfam" id="TIGR02350">
    <property type="entry name" value="prok_dnaK"/>
    <property type="match status" value="1"/>
</dbReference>
<dbReference type="PANTHER" id="PTHR19375">
    <property type="entry name" value="HEAT SHOCK PROTEIN 70KDA"/>
    <property type="match status" value="1"/>
</dbReference>
<dbReference type="Pfam" id="PF00012">
    <property type="entry name" value="HSP70"/>
    <property type="match status" value="1"/>
</dbReference>
<dbReference type="PRINTS" id="PR00301">
    <property type="entry name" value="HEATSHOCK70"/>
</dbReference>
<dbReference type="SUPFAM" id="SSF53067">
    <property type="entry name" value="Actin-like ATPase domain"/>
    <property type="match status" value="2"/>
</dbReference>
<dbReference type="SUPFAM" id="SSF100934">
    <property type="entry name" value="Heat shock protein 70kD (HSP70), C-terminal subdomain"/>
    <property type="match status" value="1"/>
</dbReference>
<dbReference type="SUPFAM" id="SSF100920">
    <property type="entry name" value="Heat shock protein 70kD (HSP70), peptide-binding domain"/>
    <property type="match status" value="1"/>
</dbReference>
<dbReference type="PROSITE" id="PS00297">
    <property type="entry name" value="HSP70_1"/>
    <property type="match status" value="1"/>
</dbReference>
<dbReference type="PROSITE" id="PS00329">
    <property type="entry name" value="HSP70_2"/>
    <property type="match status" value="1"/>
</dbReference>
<dbReference type="PROSITE" id="PS01036">
    <property type="entry name" value="HSP70_3"/>
    <property type="match status" value="1"/>
</dbReference>
<name>DNAK_BACAN</name>
<comment type="function">
    <text evidence="1">Acts as a chaperone.</text>
</comment>
<comment type="induction">
    <text evidence="1">By stress conditions e.g. heat shock.</text>
</comment>
<comment type="similarity">
    <text evidence="1">Belongs to the heat shock protein 70 family.</text>
</comment>
<evidence type="ECO:0000255" key="1">
    <source>
        <dbReference type="HAMAP-Rule" id="MF_00332"/>
    </source>
</evidence>
<evidence type="ECO:0000256" key="2">
    <source>
        <dbReference type="SAM" id="MobiDB-lite"/>
    </source>
</evidence>
<feature type="chain" id="PRO_0000078414" description="Chaperone protein DnaK">
    <location>
        <begin position="1"/>
        <end position="611"/>
    </location>
</feature>
<feature type="region of interest" description="Disordered" evidence="2">
    <location>
        <begin position="577"/>
        <end position="598"/>
    </location>
</feature>
<feature type="compositionally biased region" description="Low complexity" evidence="2">
    <location>
        <begin position="577"/>
        <end position="592"/>
    </location>
</feature>
<feature type="modified residue" description="Phosphothreonine; by autocatalysis" evidence="1">
    <location>
        <position position="173"/>
    </location>
</feature>
<keyword id="KW-0067">ATP-binding</keyword>
<keyword id="KW-0143">Chaperone</keyword>
<keyword id="KW-0547">Nucleotide-binding</keyword>
<keyword id="KW-0597">Phosphoprotein</keyword>
<keyword id="KW-1185">Reference proteome</keyword>
<keyword id="KW-0346">Stress response</keyword>
<gene>
    <name evidence="1" type="primary">dnaK</name>
    <name type="ordered locus">BA_4539</name>
    <name type="ordered locus">GBAA_4539</name>
    <name type="ordered locus">BAS4213</name>
</gene>
<reference key="1">
    <citation type="journal article" date="2003" name="Nature">
        <title>The genome sequence of Bacillus anthracis Ames and comparison to closely related bacteria.</title>
        <authorList>
            <person name="Read T.D."/>
            <person name="Peterson S.N."/>
            <person name="Tourasse N.J."/>
            <person name="Baillie L.W."/>
            <person name="Paulsen I.T."/>
            <person name="Nelson K.E."/>
            <person name="Tettelin H."/>
            <person name="Fouts D.E."/>
            <person name="Eisen J.A."/>
            <person name="Gill S.R."/>
            <person name="Holtzapple E.K."/>
            <person name="Okstad O.A."/>
            <person name="Helgason E."/>
            <person name="Rilstone J."/>
            <person name="Wu M."/>
            <person name="Kolonay J.F."/>
            <person name="Beanan M.J."/>
            <person name="Dodson R.J."/>
            <person name="Brinkac L.M."/>
            <person name="Gwinn M.L."/>
            <person name="DeBoy R.T."/>
            <person name="Madpu R."/>
            <person name="Daugherty S.C."/>
            <person name="Durkin A.S."/>
            <person name="Haft D.H."/>
            <person name="Nelson W.C."/>
            <person name="Peterson J.D."/>
            <person name="Pop M."/>
            <person name="Khouri H.M."/>
            <person name="Radune D."/>
            <person name="Benton J.L."/>
            <person name="Mahamoud Y."/>
            <person name="Jiang L."/>
            <person name="Hance I.R."/>
            <person name="Weidman J.F."/>
            <person name="Berry K.J."/>
            <person name="Plaut R.D."/>
            <person name="Wolf A.M."/>
            <person name="Watkins K.L."/>
            <person name="Nierman W.C."/>
            <person name="Hazen A."/>
            <person name="Cline R.T."/>
            <person name="Redmond C."/>
            <person name="Thwaite J.E."/>
            <person name="White O."/>
            <person name="Salzberg S.L."/>
            <person name="Thomason B."/>
            <person name="Friedlander A.M."/>
            <person name="Koehler T.M."/>
            <person name="Hanna P.C."/>
            <person name="Kolstoe A.-B."/>
            <person name="Fraser C.M."/>
        </authorList>
    </citation>
    <scope>NUCLEOTIDE SEQUENCE [LARGE SCALE GENOMIC DNA]</scope>
    <source>
        <strain>Ames / isolate Porton</strain>
    </source>
</reference>
<reference key="2">
    <citation type="journal article" date="2009" name="J. Bacteriol.">
        <title>The complete genome sequence of Bacillus anthracis Ames 'Ancestor'.</title>
        <authorList>
            <person name="Ravel J."/>
            <person name="Jiang L."/>
            <person name="Stanley S.T."/>
            <person name="Wilson M.R."/>
            <person name="Decker R.S."/>
            <person name="Read T.D."/>
            <person name="Worsham P."/>
            <person name="Keim P.S."/>
            <person name="Salzberg S.L."/>
            <person name="Fraser-Liggett C.M."/>
            <person name="Rasko D.A."/>
        </authorList>
    </citation>
    <scope>NUCLEOTIDE SEQUENCE [LARGE SCALE GENOMIC DNA]</scope>
    <source>
        <strain>Ames ancestor</strain>
    </source>
</reference>
<reference key="3">
    <citation type="submission" date="2004-01" db="EMBL/GenBank/DDBJ databases">
        <title>Complete genome sequence of Bacillus anthracis Sterne.</title>
        <authorList>
            <person name="Brettin T.S."/>
            <person name="Bruce D."/>
            <person name="Challacombe J.F."/>
            <person name="Gilna P."/>
            <person name="Han C."/>
            <person name="Hill K."/>
            <person name="Hitchcock P."/>
            <person name="Jackson P."/>
            <person name="Keim P."/>
            <person name="Longmire J."/>
            <person name="Lucas S."/>
            <person name="Okinaka R."/>
            <person name="Richardson P."/>
            <person name="Rubin E."/>
            <person name="Tice H."/>
        </authorList>
    </citation>
    <scope>NUCLEOTIDE SEQUENCE [LARGE SCALE GENOMIC DNA]</scope>
    <source>
        <strain>Sterne</strain>
    </source>
</reference>
<organism>
    <name type="scientific">Bacillus anthracis</name>
    <dbReference type="NCBI Taxonomy" id="1392"/>
    <lineage>
        <taxon>Bacteria</taxon>
        <taxon>Bacillati</taxon>
        <taxon>Bacillota</taxon>
        <taxon>Bacilli</taxon>
        <taxon>Bacillales</taxon>
        <taxon>Bacillaceae</taxon>
        <taxon>Bacillus</taxon>
        <taxon>Bacillus cereus group</taxon>
    </lineage>
</organism>
<protein>
    <recommendedName>
        <fullName evidence="1">Chaperone protein DnaK</fullName>
    </recommendedName>
    <alternativeName>
        <fullName evidence="1">HSP70</fullName>
    </alternativeName>
    <alternativeName>
        <fullName evidence="1">Heat shock 70 kDa protein</fullName>
    </alternativeName>
    <alternativeName>
        <fullName evidence="1">Heat shock protein 70</fullName>
    </alternativeName>
</protein>
<proteinExistence type="inferred from homology"/>